<evidence type="ECO:0000250" key="1"/>
<evidence type="ECO:0000255" key="2">
    <source>
        <dbReference type="PROSITE-ProRule" id="PRU00794"/>
    </source>
</evidence>
<evidence type="ECO:0000256" key="3">
    <source>
        <dbReference type="SAM" id="MobiDB-lite"/>
    </source>
</evidence>
<evidence type="ECO:0000269" key="4">
    <source>
    </source>
</evidence>
<evidence type="ECO:0000269" key="5">
    <source>
    </source>
</evidence>
<evidence type="ECO:0000269" key="6">
    <source>
    </source>
</evidence>
<evidence type="ECO:0000269" key="7">
    <source>
    </source>
</evidence>
<evidence type="ECO:0000269" key="8">
    <source>
    </source>
</evidence>
<evidence type="ECO:0000269" key="9">
    <source>
    </source>
</evidence>
<evidence type="ECO:0000269" key="10">
    <source>
    </source>
</evidence>
<evidence type="ECO:0000269" key="11">
    <source>
    </source>
</evidence>
<evidence type="ECO:0000269" key="12">
    <source>
    </source>
</evidence>
<evidence type="ECO:0000269" key="13">
    <source>
    </source>
</evidence>
<evidence type="ECO:0000303" key="14">
    <source>
    </source>
</evidence>
<evidence type="ECO:0000305" key="15"/>
<evidence type="ECO:0000312" key="16">
    <source>
        <dbReference type="SGD" id="S000005062"/>
    </source>
</evidence>
<evidence type="ECO:0007744" key="17">
    <source>
    </source>
</evidence>
<evidence type="ECO:0007744" key="18">
    <source>
    </source>
</evidence>
<evidence type="ECO:0007744" key="19">
    <source>
    </source>
</evidence>
<evidence type="ECO:0007829" key="20">
    <source>
        <dbReference type="PDB" id="2JVB"/>
    </source>
</evidence>
<evidence type="ECO:0007829" key="21">
    <source>
        <dbReference type="PDB" id="4KG3"/>
    </source>
</evidence>
<evidence type="ECO:0007829" key="22">
    <source>
        <dbReference type="PDB" id="5LM5"/>
    </source>
</evidence>
<evidence type="ECO:0007829" key="23">
    <source>
        <dbReference type="PDB" id="5LMF"/>
    </source>
</evidence>
<evidence type="ECO:0007829" key="24">
    <source>
        <dbReference type="PDB" id="5LMG"/>
    </source>
</evidence>
<evidence type="ECO:0007829" key="25">
    <source>
        <dbReference type="PDB" id="6Y3Z"/>
    </source>
</evidence>
<keyword id="KW-0002">3D-structure</keyword>
<keyword id="KW-0963">Cytoplasm</keyword>
<keyword id="KW-0378">Hydrolase</keyword>
<keyword id="KW-0464">Manganese</keyword>
<keyword id="KW-0479">Metal-binding</keyword>
<keyword id="KW-0507">mRNA processing</keyword>
<keyword id="KW-0866">Nonsense-mediated mRNA decay</keyword>
<keyword id="KW-0597">Phosphoprotein</keyword>
<keyword id="KW-1185">Reference proteome</keyword>
<keyword id="KW-0694">RNA-binding</keyword>
<organism>
    <name type="scientific">Saccharomyces cerevisiae (strain ATCC 204508 / S288c)</name>
    <name type="common">Baker's yeast</name>
    <dbReference type="NCBI Taxonomy" id="559292"/>
    <lineage>
        <taxon>Eukaryota</taxon>
        <taxon>Fungi</taxon>
        <taxon>Dikarya</taxon>
        <taxon>Ascomycota</taxon>
        <taxon>Saccharomycotina</taxon>
        <taxon>Saccharomycetes</taxon>
        <taxon>Saccharomycetales</taxon>
        <taxon>Saccharomycetaceae</taxon>
        <taxon>Saccharomyces</taxon>
    </lineage>
</organism>
<feature type="chain" id="PRO_0000057054" description="m7GpppN-mRNA hydrolase">
    <location>
        <begin position="1"/>
        <end position="970"/>
    </location>
</feature>
<feature type="domain" description="Nudix hydrolase" evidence="2">
    <location>
        <begin position="101"/>
        <end position="228"/>
    </location>
</feature>
<feature type="region of interest" description="Disordered" evidence="3">
    <location>
        <begin position="302"/>
        <end position="341"/>
    </location>
</feature>
<feature type="region of interest" description="Disordered" evidence="3">
    <location>
        <begin position="417"/>
        <end position="465"/>
    </location>
</feature>
<feature type="region of interest" description="Disordered" evidence="3">
    <location>
        <begin position="501"/>
        <end position="520"/>
    </location>
</feature>
<feature type="region of interest" description="Disordered" evidence="3">
    <location>
        <begin position="528"/>
        <end position="692"/>
    </location>
</feature>
<feature type="region of interest" description="Disordered" evidence="3">
    <location>
        <begin position="831"/>
        <end position="867"/>
    </location>
</feature>
<feature type="short sequence motif" description="Nudix box">
    <location>
        <begin position="134"/>
        <end position="155"/>
    </location>
</feature>
<feature type="compositionally biased region" description="Basic and acidic residues" evidence="3">
    <location>
        <begin position="302"/>
        <end position="314"/>
    </location>
</feature>
<feature type="compositionally biased region" description="Low complexity" evidence="3">
    <location>
        <begin position="315"/>
        <end position="334"/>
    </location>
</feature>
<feature type="compositionally biased region" description="Acidic residues" evidence="3">
    <location>
        <begin position="528"/>
        <end position="539"/>
    </location>
</feature>
<feature type="compositionally biased region" description="Basic and acidic residues" evidence="3">
    <location>
        <begin position="560"/>
        <end position="576"/>
    </location>
</feature>
<feature type="compositionally biased region" description="Polar residues" evidence="3">
    <location>
        <begin position="577"/>
        <end position="590"/>
    </location>
</feature>
<feature type="compositionally biased region" description="Low complexity" evidence="3">
    <location>
        <begin position="596"/>
        <end position="608"/>
    </location>
</feature>
<feature type="compositionally biased region" description="Acidic residues" evidence="3">
    <location>
        <begin position="625"/>
        <end position="637"/>
    </location>
</feature>
<feature type="compositionally biased region" description="Polar residues" evidence="3">
    <location>
        <begin position="677"/>
        <end position="691"/>
    </location>
</feature>
<feature type="compositionally biased region" description="Polar residues" evidence="3">
    <location>
        <begin position="848"/>
        <end position="863"/>
    </location>
</feature>
<feature type="binding site" evidence="1">
    <location>
        <position position="149"/>
    </location>
    <ligand>
        <name>Mn(2+)</name>
        <dbReference type="ChEBI" id="CHEBI:29035"/>
    </ligand>
</feature>
<feature type="binding site" evidence="1">
    <location>
        <position position="153"/>
    </location>
    <ligand>
        <name>Mn(2+)</name>
        <dbReference type="ChEBI" id="CHEBI:29035"/>
    </ligand>
</feature>
<feature type="modified residue" description="Phosphoserine" evidence="18">
    <location>
        <position position="116"/>
    </location>
</feature>
<feature type="modified residue" description="Phosphoserine" evidence="19">
    <location>
        <position position="439"/>
    </location>
</feature>
<feature type="modified residue" description="Phosphothreonine" evidence="19">
    <location>
        <position position="677"/>
    </location>
</feature>
<feature type="modified residue" description="Phosphoserine" evidence="17 19">
    <location>
        <position position="679"/>
    </location>
</feature>
<feature type="modified residue" description="Phosphoserine" evidence="18 19">
    <location>
        <position position="682"/>
    </location>
</feature>
<feature type="modified residue" description="Phosphoserine" evidence="17 18 19">
    <location>
        <position position="751"/>
    </location>
</feature>
<feature type="modified residue" description="Phosphoserine" evidence="19">
    <location>
        <position position="771"/>
    </location>
</feature>
<feature type="modified residue" description="Phosphoserine" evidence="19">
    <location>
        <position position="773"/>
    </location>
</feature>
<feature type="modified residue" description="Phosphoserine" evidence="19">
    <location>
        <position position="778"/>
    </location>
</feature>
<feature type="sequence variant" description="In strain: YJM339." evidence="13">
    <original>V</original>
    <variation>A</variation>
    <location>
        <position position="188"/>
    </location>
</feature>
<feature type="sequence variant" description="In strain: V1-09, YJM269, YJM270, YJM326, YJM339, YJM627 and YJM1129." evidence="13">
    <location>
        <position position="288"/>
    </location>
</feature>
<feature type="sequence variant" description="In strain: YJM280, YJM 20 and YJM339." evidence="13">
    <original>L</original>
    <variation>H</variation>
    <location>
        <position position="301"/>
    </location>
</feature>
<feature type="sequence variant" description="In strain: YJM627." evidence="13">
    <original>S</original>
    <variation>P</variation>
    <location>
        <position position="319"/>
    </location>
</feature>
<feature type="sequence variant" description="In strain: YJM339." evidence="13">
    <original>D</original>
    <variation>N</variation>
    <location>
        <position position="494"/>
    </location>
</feature>
<feature type="sequence variant" description="In strain: SK1, V1-09, YJM269, YJM270, YJM280, YJM320, YJM326, YJM339, YJM627 and YJM1129." evidence="13">
    <original>I</original>
    <variation>T</variation>
    <location>
        <position position="505"/>
    </location>
</feature>
<feature type="sequence variant" description="In strain: YJM269, YJM270, YJM326 and YJM1129." evidence="13">
    <original>G</original>
    <variation>D</variation>
    <location>
        <position position="522"/>
    </location>
</feature>
<feature type="sequence variant" description="In strain: YJM280 and YJM320." evidence="13">
    <original>N</original>
    <variation>T</variation>
    <location>
        <position position="547"/>
    </location>
</feature>
<feature type="sequence variant" description="In strain: YJM269, YJM270, YJM326 and YJM1129." evidence="13">
    <original>S</original>
    <variation>R</variation>
    <location>
        <position position="567"/>
    </location>
</feature>
<feature type="sequence variant" description="In strain: YJM269, YJM270, YJM280, YJM320, YJM326 and YJM1129." evidence="13">
    <original>N</original>
    <variation>S</variation>
    <location>
        <position position="574"/>
    </location>
</feature>
<feature type="sequence variant" description="In strain: V1-09, YJM269, YJM270, YJM280, YJM320, YJM326, YJM339 and YJM1129." evidence="13">
    <original>S</original>
    <variation>N</variation>
    <location>
        <position position="577"/>
    </location>
</feature>
<feature type="sequence variant" description="In strain: V1-09 and YJM339." evidence="13">
    <original>G</original>
    <variation>S</variation>
    <location>
        <position position="622"/>
    </location>
</feature>
<feature type="sequence variant" description="In strain: YJM280 and YJM320." evidence="13">
    <original>D</original>
    <variation>G</variation>
    <location>
        <position position="650"/>
    </location>
</feature>
<feature type="sequence variant" description="In strain: YJM269 and YJM270." evidence="13">
    <original>P</original>
    <variation>S</variation>
    <location>
        <position position="740"/>
    </location>
</feature>
<feature type="sequence variant" description="In strain: YJM 69, YJM270, YJM326 and YJM1129." evidence="13">
    <original>T</original>
    <variation>A</variation>
    <location>
        <position position="807"/>
    </location>
</feature>
<feature type="sequence variant" description="In strain: YJM269, YJM270, YJM280, YJM320, YJM326 and YJM1129." evidence="13">
    <original>S</original>
    <variation>P</variation>
    <location>
        <position position="823"/>
    </location>
</feature>
<feature type="sequence variant" description="In strain: YJM280 and YJM320." evidence="13">
    <original>D</original>
    <variation>N</variation>
    <location>
        <position position="835"/>
    </location>
</feature>
<feature type="sequence variant" description="In strain: V1-09." evidence="13">
    <original>G</original>
    <variation>V</variation>
    <location>
        <position position="844"/>
    </location>
</feature>
<feature type="sequence variant" description="In strain: YJM280, YJM320 and YJM627." evidence="13">
    <original>S</original>
    <variation>P</variation>
    <location>
        <position position="851"/>
    </location>
</feature>
<feature type="sequence variant" description="In strain: YJM269, YJM270, YJM326 and YJM1129." evidence="13">
    <original>M</original>
    <variation>I</variation>
    <location>
        <position position="854"/>
    </location>
</feature>
<feature type="sequence variant" description="In strain: YJM269 and YJM270." evidence="13">
    <original>E</original>
    <variation>Q</variation>
    <location>
        <position position="864"/>
    </location>
</feature>
<feature type="sequence variant" description="In strain: YJM269, YJM270, YJM326 and YJM1129." evidence="13">
    <original>L</original>
    <variation>S</variation>
    <location>
        <position position="865"/>
    </location>
</feature>
<feature type="sequence variant" description="In strain: YJM627.">
    <original>D</original>
    <variation>A</variation>
    <location>
        <position position="866"/>
    </location>
</feature>
<feature type="sequence variant" description="In strain: YJM280 and YJM320." evidence="13">
    <original>A</original>
    <variation>T</variation>
    <location>
        <position position="909"/>
    </location>
</feature>
<feature type="sequence variant" description="In strain: YJM627." evidence="13">
    <original>I</original>
    <variation>L</variation>
    <location>
        <position position="945"/>
    </location>
</feature>
<feature type="sequence variant" description="In strain: V1-09." evidence="13">
    <original>D</original>
    <variation>E</variation>
    <location>
        <position position="951"/>
    </location>
</feature>
<feature type="mutagenesis site" description="In DCP2-7; impairs mRNA decay at 37 degrees Celsius; when associated with V-68 and V-142." evidence="6">
    <original>N</original>
    <variation>D</variation>
    <location>
        <position position="60"/>
    </location>
</feature>
<feature type="mutagenesis site" description="In DCP2-7; impairs mRNA decay at 37 degrees Celsius; when associated with D-60 and V-142." evidence="6">
    <original>I</original>
    <variation>V</variation>
    <location>
        <position position="68"/>
    </location>
</feature>
<feature type="mutagenesis site" description="In DCP2-7; impairs mRNA decay at 37 degrees Celsius; when associated with D-60 and V-68." evidence="6">
    <original>D</original>
    <variation>V</variation>
    <location>
        <position position="142"/>
    </location>
</feature>
<feature type="sequence conflict" description="In Ref. 2; AAA68866." evidence="15" ref="2">
    <original>P</original>
    <variation>L</variation>
    <location>
        <position position="425"/>
    </location>
</feature>
<feature type="helix" evidence="25">
    <location>
        <begin position="15"/>
        <end position="25"/>
    </location>
</feature>
<feature type="turn" evidence="25">
    <location>
        <begin position="26"/>
        <end position="29"/>
    </location>
</feature>
<feature type="helix" evidence="25">
    <location>
        <begin position="41"/>
        <end position="54"/>
    </location>
</feature>
<feature type="helix" evidence="25">
    <location>
        <begin position="56"/>
        <end position="59"/>
    </location>
</feature>
<feature type="helix" evidence="25">
    <location>
        <begin position="68"/>
        <end position="78"/>
    </location>
</feature>
<feature type="strand" evidence="25">
    <location>
        <begin position="85"/>
        <end position="87"/>
    </location>
</feature>
<feature type="helix" evidence="25">
    <location>
        <begin position="89"/>
        <end position="99"/>
    </location>
</feature>
<feature type="strand" evidence="21">
    <location>
        <begin position="105"/>
        <end position="112"/>
    </location>
</feature>
<feature type="strand" evidence="21">
    <location>
        <begin position="117"/>
        <end position="125"/>
    </location>
</feature>
<feature type="strand" evidence="21">
    <location>
        <begin position="132"/>
        <end position="135"/>
    </location>
</feature>
<feature type="strand" evidence="20">
    <location>
        <begin position="138"/>
        <end position="140"/>
    </location>
</feature>
<feature type="helix" evidence="21">
    <location>
        <begin position="142"/>
        <end position="154"/>
    </location>
</feature>
<feature type="turn" evidence="21">
    <location>
        <begin position="159"/>
        <end position="161"/>
    </location>
</feature>
<feature type="strand" evidence="21">
    <location>
        <begin position="167"/>
        <end position="172"/>
    </location>
</feature>
<feature type="strand" evidence="21">
    <location>
        <begin position="175"/>
        <end position="185"/>
    </location>
</feature>
<feature type="strand" evidence="20">
    <location>
        <begin position="187"/>
        <end position="189"/>
    </location>
</feature>
<feature type="strand" evidence="21">
    <location>
        <begin position="194"/>
        <end position="206"/>
    </location>
</feature>
<feature type="helix" evidence="21">
    <location>
        <begin position="207"/>
        <end position="213"/>
    </location>
</feature>
<feature type="helix" evidence="21">
    <location>
        <begin position="214"/>
        <end position="216"/>
    </location>
</feature>
<feature type="strand" evidence="21">
    <location>
        <begin position="221"/>
        <end position="223"/>
    </location>
</feature>
<feature type="helix" evidence="21">
    <location>
        <begin position="224"/>
        <end position="227"/>
    </location>
</feature>
<feature type="helix" evidence="21">
    <location>
        <begin position="228"/>
        <end position="237"/>
    </location>
</feature>
<feature type="helix" evidence="21">
    <location>
        <begin position="242"/>
        <end position="244"/>
    </location>
</feature>
<feature type="strand" evidence="25">
    <location>
        <begin position="259"/>
        <end position="261"/>
    </location>
</feature>
<feature type="helix" evidence="22">
    <location>
        <begin position="440"/>
        <end position="449"/>
    </location>
</feature>
<feature type="helix" evidence="23">
    <location>
        <begin position="485"/>
        <end position="496"/>
    </location>
</feature>
<feature type="helix" evidence="24">
    <location>
        <begin position="958"/>
        <end position="967"/>
    </location>
</feature>
<reference key="1">
    <citation type="journal article" date="1995" name="Genes Dev.">
        <title>Identification of a novel component of the nonsense-mediated mRNA decay pathway by use of an interacting protein screen.</title>
        <authorList>
            <person name="He F."/>
            <person name="Jacobson A."/>
        </authorList>
    </citation>
    <scope>NUCLEOTIDE SEQUENCE [GENOMIC DNA]</scope>
</reference>
<reference key="2">
    <citation type="submission" date="1995-06" db="EMBL/GenBank/DDBJ databases">
        <authorList>
            <person name="Tzagoloff A.A."/>
        </authorList>
    </citation>
    <scope>NUCLEOTIDE SEQUENCE [GENOMIC DNA]</scope>
    <source>
        <strain>ATCC 24657 / D273-10B</strain>
    </source>
</reference>
<reference key="3">
    <citation type="journal article" date="2008" name="Genetics">
        <title>Sequential elimination of major-effect contributors identifies additional quantitative trait loci conditioning high-temperature growth in yeast.</title>
        <authorList>
            <person name="Sinha H."/>
            <person name="David L."/>
            <person name="Pascon R.C."/>
            <person name="Clauder-Muenster S."/>
            <person name="Krishnakumar S."/>
            <person name="Nguyen M."/>
            <person name="Shi G."/>
            <person name="Dean J."/>
            <person name="Davis R.W."/>
            <person name="Oefner P.J."/>
            <person name="McCusker J.H."/>
            <person name="Steinmetz L.M."/>
        </authorList>
    </citation>
    <scope>NUCLEOTIDE SEQUENCE [GENOMIC DNA]</scope>
    <scope>VARIANTS ALA-188; ASN-288 DEL; HIS-301; PRO-319; ASN-494; THR-505; ASP-522; THR-547; ARG-567; SER-574; ASN-577; SER-622; GLY-650; SER-740; ALA-807; PRO-823; ASN-835; VAL-844; PRO-851; ILE-854; GLN-864; SER-865; THR-909; LEU-945 AND GLU-951</scope>
    <source>
        <strain>ATCC 200060 / W303</strain>
        <strain>S103</strain>
        <strain>SK1</strain>
        <strain>V1-09</strain>
        <strain>YJM 1129</strain>
        <strain>YJM 269</strain>
        <strain>YJM 270</strain>
        <strain>YJM 320</strain>
        <strain>YJM 326</strain>
        <strain>YJM 339</strain>
        <strain>YJM 627</strain>
        <strain>YJM230</strain>
    </source>
</reference>
<reference key="4">
    <citation type="journal article" date="1997" name="Yeast">
        <title>The DNA sequence of cosmid 14-13b from chromosome XIV of Saccharomyces cerevisiae reveals an unusually high number of overlapping open reading frames.</title>
        <authorList>
            <person name="de Antoni A."/>
            <person name="D'Angelo M."/>
            <person name="Dal Pero F."/>
            <person name="Sartorello F."/>
            <person name="Pandolfo D."/>
            <person name="Pallavicini A."/>
            <person name="Lanfranchi G."/>
            <person name="Valle G."/>
        </authorList>
    </citation>
    <scope>NUCLEOTIDE SEQUENCE [GENOMIC DNA]</scope>
</reference>
<reference key="5">
    <citation type="journal article" date="1997" name="Nature">
        <title>The nucleotide sequence of Saccharomyces cerevisiae chromosome XIV and its evolutionary implications.</title>
        <authorList>
            <person name="Philippsen P."/>
            <person name="Kleine K."/>
            <person name="Poehlmann R."/>
            <person name="Duesterhoeft A."/>
            <person name="Hamberg K."/>
            <person name="Hegemann J.H."/>
            <person name="Obermaier B."/>
            <person name="Urrestarazu L.A."/>
            <person name="Aert R."/>
            <person name="Albermann K."/>
            <person name="Altmann R."/>
            <person name="Andre B."/>
            <person name="Baladron V."/>
            <person name="Ballesta J.P.G."/>
            <person name="Becam A.-M."/>
            <person name="Beinhauer J.D."/>
            <person name="Boskovic J."/>
            <person name="Buitrago M.J."/>
            <person name="Bussereau F."/>
            <person name="Coster F."/>
            <person name="Crouzet M."/>
            <person name="D'Angelo M."/>
            <person name="Dal Pero F."/>
            <person name="De Antoni A."/>
            <person name="del Rey F."/>
            <person name="Doignon F."/>
            <person name="Domdey H."/>
            <person name="Dubois E."/>
            <person name="Fiedler T.A."/>
            <person name="Fleig U."/>
            <person name="Floeth M."/>
            <person name="Fritz C."/>
            <person name="Gaillardin C."/>
            <person name="Garcia-Cantalejo J.M."/>
            <person name="Glansdorff N."/>
            <person name="Goffeau A."/>
            <person name="Gueldener U."/>
            <person name="Herbert C.J."/>
            <person name="Heumann K."/>
            <person name="Heuss-Neitzel D."/>
            <person name="Hilbert H."/>
            <person name="Hinni K."/>
            <person name="Iraqui Houssaini I."/>
            <person name="Jacquet M."/>
            <person name="Jimenez A."/>
            <person name="Jonniaux J.-L."/>
            <person name="Karpfinger-Hartl L."/>
            <person name="Lanfranchi G."/>
            <person name="Lepingle A."/>
            <person name="Levesque H."/>
            <person name="Lyck R."/>
            <person name="Maftahi M."/>
            <person name="Mallet L."/>
            <person name="Maurer C.T.C."/>
            <person name="Messenguy F."/>
            <person name="Mewes H.-W."/>
            <person name="Moestl D."/>
            <person name="Nasr F."/>
            <person name="Nicaud J.-M."/>
            <person name="Niedenthal R.K."/>
            <person name="Pandolfo D."/>
            <person name="Pierard A."/>
            <person name="Piravandi E."/>
            <person name="Planta R.J."/>
            <person name="Pohl T.M."/>
            <person name="Purnelle B."/>
            <person name="Rebischung C."/>
            <person name="Remacha M.A."/>
            <person name="Revuelta J.L."/>
            <person name="Rinke M."/>
            <person name="Saiz J.E."/>
            <person name="Sartorello F."/>
            <person name="Scherens B."/>
            <person name="Sen-Gupta M."/>
            <person name="Soler-Mira A."/>
            <person name="Urbanus J.H.M."/>
            <person name="Valle G."/>
            <person name="Van Dyck L."/>
            <person name="Verhasselt P."/>
            <person name="Vierendeels F."/>
            <person name="Vissers S."/>
            <person name="Voet M."/>
            <person name="Volckaert G."/>
            <person name="Wach A."/>
            <person name="Wambutt R."/>
            <person name="Wedler H."/>
            <person name="Zollner A."/>
            <person name="Hani J."/>
        </authorList>
    </citation>
    <scope>NUCLEOTIDE SEQUENCE [LARGE SCALE GENOMIC DNA]</scope>
    <source>
        <strain>ATCC 204508 / S288c</strain>
    </source>
</reference>
<reference key="6">
    <citation type="journal article" date="2007" name="J. Proteome Res.">
        <title>Large-scale phosphorylation analysis of alpha-factor-arrested Saccharomyces cerevisiae.</title>
        <authorList>
            <person name="Li X."/>
            <person name="Gerber S.A."/>
            <person name="Rudner A.D."/>
            <person name="Beausoleil S.A."/>
            <person name="Haas W."/>
            <person name="Villen J."/>
            <person name="Elias J.E."/>
            <person name="Gygi S.P."/>
        </authorList>
    </citation>
    <scope>PHOSPHORYLATION [LARGE SCALE ANALYSIS] AT SER-679 AND SER-751</scope>
    <scope>IDENTIFICATION BY MASS SPECTROMETRY [LARGE SCALE ANALYSIS]</scope>
    <source>
        <strain>ADR376</strain>
    </source>
</reference>
<reference key="7">
    <citation type="journal article" date="2008" name="Mol. Cell. Biol.">
        <title>Crystal structure of human Edc3 and its functional implications.</title>
        <authorList>
            <person name="Ling S.H."/>
            <person name="Decker C.J."/>
            <person name="Walsh M.A."/>
            <person name="She M."/>
            <person name="Parker R."/>
            <person name="Song H."/>
        </authorList>
    </citation>
    <scope>INTERACTION WITH EDC3</scope>
</reference>
<reference key="8">
    <citation type="journal article" date="2014" name="G3 (Bethesda)">
        <title>The reference genome sequence of Saccharomyces cerevisiae: Then and now.</title>
        <authorList>
            <person name="Engel S.R."/>
            <person name="Dietrich F.S."/>
            <person name="Fisk D.G."/>
            <person name="Binkley G."/>
            <person name="Balakrishnan R."/>
            <person name="Costanzo M.C."/>
            <person name="Dwight S.S."/>
            <person name="Hitz B.C."/>
            <person name="Karra K."/>
            <person name="Nash R.S."/>
            <person name="Weng S."/>
            <person name="Wong E.D."/>
            <person name="Lloyd P."/>
            <person name="Skrzypek M.S."/>
            <person name="Miyasato S.R."/>
            <person name="Simison M."/>
            <person name="Cherry J.M."/>
        </authorList>
    </citation>
    <scope>GENOME REANNOTATION</scope>
    <source>
        <strain>ATCC 204508 / S288c</strain>
    </source>
</reference>
<reference key="9">
    <citation type="journal article" date="1999" name="EMBO J.">
        <title>The DCP2 protein is required for mRNA decapping in Saccharomyces cerevisiae and contains a functional MutT motif.</title>
        <authorList>
            <person name="Dunckley T."/>
            <person name="Parker R."/>
        </authorList>
    </citation>
    <scope>FUNCTION</scope>
    <scope>INTERACTION WITH DCP1</scope>
</reference>
<reference key="10">
    <citation type="journal article" date="2000" name="Yeast">
        <title>Genome-wide protein interaction screens reveal functional networks involving Sm-like proteins.</title>
        <authorList>
            <person name="Fromont-Racine M."/>
            <person name="Mayes A.E."/>
            <person name="Brunet-Simon A."/>
            <person name="Rain J.-C."/>
            <person name="Colley A."/>
            <person name="Dix I."/>
            <person name="Decourty L."/>
            <person name="Joly N."/>
            <person name="Ricard F."/>
            <person name="Beggs J.D."/>
            <person name="Legrain P."/>
        </authorList>
    </citation>
    <scope>INTERACTION WITH LSM2; LSM4 AND LSM8</scope>
</reference>
<reference key="11">
    <citation type="journal article" date="2001" name="Genetics">
        <title>Two related proteins, Edc1p and Edc2p, stimulate mRNA decapping in Saccharomyces cerevisiae.</title>
        <authorList>
            <person name="Dunckley T."/>
            <person name="Tucker M."/>
            <person name="Parker R."/>
        </authorList>
    </citation>
    <scope>FUNCTION</scope>
    <scope>MUTAGENESIS OF ASN-60; ILE-68 AND ASP-142</scope>
    <scope>INTERACTION WITH EDC1</scope>
</reference>
<reference key="12">
    <citation type="journal article" date="2001" name="Mol. Cell">
        <title>Targeting an mRNA for decapping: displacement of translation factors and association of the Lsm1p-7p complex on deadenylated yeast mRNAs.</title>
        <authorList>
            <person name="Tharun S."/>
            <person name="Parker R."/>
        </authorList>
    </citation>
    <scope>INTERACTION WITH MRNA</scope>
    <scope>FUNCTION OF THE DCP1-DCP2 COMPLEX</scope>
</reference>
<reference key="13">
    <citation type="journal article" date="2003" name="Nature">
        <title>Global analysis of protein expression in yeast.</title>
        <authorList>
            <person name="Ghaemmaghami S."/>
            <person name="Huh W.-K."/>
            <person name="Bower K."/>
            <person name="Howson R.W."/>
            <person name="Belle A."/>
            <person name="Dephoure N."/>
            <person name="O'Shea E.K."/>
            <person name="Weissman J.S."/>
        </authorList>
    </citation>
    <scope>LEVEL OF PROTEIN EXPRESSION [LARGE SCALE ANALYSIS]</scope>
</reference>
<reference key="14">
    <citation type="journal article" date="2003" name="RNA">
        <title>Analysis of recombinant yeast decapping enzyme.</title>
        <authorList>
            <person name="Steiger M."/>
            <person name="Carr-Schmid A."/>
            <person name="Schwartz D.C."/>
            <person name="Kiledjian M."/>
            <person name="Parker R."/>
        </authorList>
    </citation>
    <scope>FUNCTION OF THE DCP1-DCP2 COMPLEX</scope>
    <scope>CATALYTIC ACTIVITY</scope>
    <scope>COFACTOR</scope>
</reference>
<reference key="15">
    <citation type="journal article" date="2003" name="Science">
        <title>Decapping and decay of messenger RNA occur in cytoplasmic processing bodies.</title>
        <authorList>
            <person name="Sheth U."/>
            <person name="Parker R."/>
        </authorList>
    </citation>
    <scope>SUBCELLULAR LOCATION</scope>
</reference>
<reference key="16">
    <citation type="journal article" date="2004" name="Nat. Struct. Mol. Biol.">
        <title>Crystal structure of Dcp1p and its functional implications in mRNA decapping.</title>
        <authorList>
            <person name="She M."/>
            <person name="Decker C.J."/>
            <person name="Sundramurthy K."/>
            <person name="Liu Y."/>
            <person name="Chen N."/>
            <person name="Parker R."/>
            <person name="Song H."/>
        </authorList>
    </citation>
    <scope>INTERACTION WITH DCP1</scope>
</reference>
<reference key="17">
    <citation type="journal article" date="2008" name="Mol. Cell. Proteomics">
        <title>A multidimensional chromatography technology for in-depth phosphoproteome analysis.</title>
        <authorList>
            <person name="Albuquerque C.P."/>
            <person name="Smolka M.B."/>
            <person name="Payne S.H."/>
            <person name="Bafna V."/>
            <person name="Eng J."/>
            <person name="Zhou H."/>
        </authorList>
    </citation>
    <scope>PHOSPHORYLATION [LARGE SCALE ANALYSIS] AT SER-116; SER-682 AND SER-751</scope>
    <scope>IDENTIFICATION BY MASS SPECTROMETRY [LARGE SCALE ANALYSIS]</scope>
</reference>
<reference key="18">
    <citation type="journal article" date="2009" name="Science">
        <title>Global analysis of Cdk1 substrate phosphorylation sites provides insights into evolution.</title>
        <authorList>
            <person name="Holt L.J."/>
            <person name="Tuch B.B."/>
            <person name="Villen J."/>
            <person name="Johnson A.D."/>
            <person name="Gygi S.P."/>
            <person name="Morgan D.O."/>
        </authorList>
    </citation>
    <scope>PHOSPHORYLATION [LARGE SCALE ANALYSIS] AT SER-439; THR-677; SER-679; SER-682; SER-751; SER-771; SER-773 AND SER-778</scope>
    <scope>IDENTIFICATION BY MASS SPECTROMETRY [LARGE SCALE ANALYSIS]</scope>
</reference>
<reference key="19">
    <citation type="journal article" date="2015" name="Nat. Cell Biol.">
        <title>A conserved mechanism of TOR-dependent RCK-mediated mRNA degradation regulates autophagy.</title>
        <authorList>
            <person name="Hu G."/>
            <person name="McQuiston T."/>
            <person name="Bernard A."/>
            <person name="Park Y.D."/>
            <person name="Qiu J."/>
            <person name="Vural A."/>
            <person name="Zhang N."/>
            <person name="Waterman S.R."/>
            <person name="Blewett N.H."/>
            <person name="Myers T.G."/>
            <person name="Maraia R.J."/>
            <person name="Kehrl J.H."/>
            <person name="Uzel G."/>
            <person name="Klionsky D.J."/>
            <person name="Williamson P.R."/>
        </authorList>
    </citation>
    <scope>FUNCTION</scope>
    <scope>DISRUPTION PHENOTYPE</scope>
</reference>
<reference key="20">
    <citation type="journal article" date="2008" name="Mol. Cell">
        <title>mRNA decapping is promoted by an RNA-binding channel in Dcp2.</title>
        <authorList>
            <person name="Deshmukh M.V."/>
            <person name="Jones B.N."/>
            <person name="Quang-Dang D.U."/>
            <person name="Flinders J."/>
            <person name="Floor S.N."/>
            <person name="Kim C."/>
            <person name="Jemielity J."/>
            <person name="Kalek M."/>
            <person name="Darzynkiewicz E."/>
            <person name="Gross J.D."/>
        </authorList>
    </citation>
    <scope>STRUCTURE BY NMR OF 100-245</scope>
</reference>
<accession>P53550</accession>
<accession>B0KZS6</accession>
<accession>B0KZU4</accession>
<accession>B0KZW2</accession>
<accession>B0KZY0</accession>
<accession>B0KZY9</accession>
<accession>B0KZZ8</accession>
<accession>B0L007</accession>
<accession>D6W164</accession>
<accession>Q6LCS6</accession>
<comment type="function">
    <text evidence="4 6 7 8">Catalytic component of the decapping complex necessary for the degradation of mRNAs, both in normal mRNA turnover and in nonsense-mediated mRNA decay (PubMed:10508173, PubMed:11139489, PubMed:11741542). Removes the 7-methyl guanine cap structure from mRNA molecules, yielding a 5'-phosphorylated mRNA fragment and 7m-GDP (PubMed:12554866). Decapping is the major pathway of mRNA degradation in yeast and occurs through deadenylation, decapping and subsequent 5' to 3' exonucleolytic decay of the transcript body (PubMed:10508173, PubMed:11139489, PubMed:11741542). Blocks autophagy in nutrient-rich conditions by repressing the expression of ATG-related genes through degradation of their transcripts (PubMed:19779198).</text>
</comment>
<comment type="catalytic activity">
    <reaction evidence="8">
        <text>a 5'-end (N(7)-methyl 5'-triphosphoguanosine)-ribonucleoside in mRNA + H2O = N(7)-methyl-GDP + a 5'-end phospho-ribonucleoside in mRNA + 2 H(+)</text>
        <dbReference type="Rhea" id="RHEA:67484"/>
        <dbReference type="Rhea" id="RHEA-COMP:15692"/>
        <dbReference type="Rhea" id="RHEA-COMP:17167"/>
        <dbReference type="ChEBI" id="CHEBI:15377"/>
        <dbReference type="ChEBI" id="CHEBI:15378"/>
        <dbReference type="ChEBI" id="CHEBI:63714"/>
        <dbReference type="ChEBI" id="CHEBI:138282"/>
        <dbReference type="ChEBI" id="CHEBI:156461"/>
        <dbReference type="EC" id="3.6.1.62"/>
    </reaction>
    <physiologicalReaction direction="left-to-right" evidence="8">
        <dbReference type="Rhea" id="RHEA:67485"/>
    </physiologicalReaction>
</comment>
<comment type="cofactor">
    <cofactor evidence="8">
        <name>Mn(2+)</name>
        <dbReference type="ChEBI" id="CHEBI:29035"/>
    </cofactor>
</comment>
<comment type="subunit">
    <text evidence="4 5 6 7 11 12">Component of the decapping complex composed of DCP1 and DCP2 (PubMed:10508173, PubMed:11741542, PubMed:14758354). Interacts with mRNA, LSM2, LSM4 and LSM8 (PubMed:10900456). Interacts with EDC3 (PubMed:18678652).</text>
</comment>
<comment type="interaction">
    <interactant intactId="EBI-270">
        <id>P53550</id>
    </interactant>
    <interactant intactId="EBI-38519">
        <id>Q12517</id>
        <label>DCP1</label>
    </interactant>
    <organismsDiffer>false</organismsDiffer>
    <experiments>6</experiments>
</comment>
<comment type="interaction">
    <interactant intactId="EBI-270">
        <id>P53550</id>
    </interactant>
    <interactant intactId="EBI-22300">
        <id>P39998</id>
        <label>EDC3</label>
    </interactant>
    <organismsDiffer>false</organismsDiffer>
    <experiments>7</experiments>
</comment>
<comment type="interaction">
    <interactant intactId="EBI-270">
        <id>P53550</id>
    </interactant>
    <interactant intactId="EBI-204">
        <id>P25644</id>
        <label>PAT1</label>
    </interactant>
    <organismsDiffer>false</organismsDiffer>
    <experiments>3</experiments>
</comment>
<comment type="interaction">
    <interactant intactId="EBI-270">
        <id>P53550</id>
    </interactant>
    <interactant intactId="EBI-9642">
        <id>P22147</id>
        <label>XRN1</label>
    </interactant>
    <organismsDiffer>false</organismsDiffer>
    <experiments>3</experiments>
</comment>
<comment type="subcellular location">
    <subcellularLocation>
        <location evidence="9">Cytoplasm</location>
        <location evidence="9">P-body</location>
    </subcellularLocation>
</comment>
<comment type="disruption phenotype">
    <text>Increases autophagy activity through accumulation of autophagy-related proteins in nutrient-replete conditions (PubMed:19779198).</text>
</comment>
<comment type="miscellaneous">
    <text evidence="10">Present with 8530 molecules/cell in log phase SD medium.</text>
</comment>
<comment type="similarity">
    <text evidence="15">Belongs to the Nudix hydrolase family. DCP2 subfamily.</text>
</comment>
<dbReference type="EC" id="3.6.1.62" evidence="8"/>
<dbReference type="EMBL" id="U31377">
    <property type="protein sequence ID" value="AAC99860.1"/>
    <property type="molecule type" value="Genomic_DNA"/>
</dbReference>
<dbReference type="EMBL" id="L43065">
    <property type="protein sequence ID" value="AAA68866.1"/>
    <property type="molecule type" value="Genomic_DNA"/>
</dbReference>
<dbReference type="EMBL" id="EF125216">
    <property type="protein sequence ID" value="ABN58539.1"/>
    <property type="molecule type" value="Genomic_DNA"/>
</dbReference>
<dbReference type="EMBL" id="EF125217">
    <property type="protein sequence ID" value="ABN58548.1"/>
    <property type="molecule type" value="Genomic_DNA"/>
</dbReference>
<dbReference type="EMBL" id="EF125218">
    <property type="protein sequence ID" value="ABN58557.1"/>
    <property type="molecule type" value="Genomic_DNA"/>
</dbReference>
<dbReference type="EMBL" id="EF125219">
    <property type="protein sequence ID" value="ABN58566.1"/>
    <property type="molecule type" value="Genomic_DNA"/>
</dbReference>
<dbReference type="EMBL" id="EF125220">
    <property type="protein sequence ID" value="ABN58578.1"/>
    <property type="molecule type" value="Genomic_DNA"/>
</dbReference>
<dbReference type="EMBL" id="EF125221">
    <property type="protein sequence ID" value="ABN58584.1"/>
    <property type="molecule type" value="Genomic_DNA"/>
</dbReference>
<dbReference type="EMBL" id="EF125222">
    <property type="protein sequence ID" value="ABN58593.1"/>
    <property type="molecule type" value="Genomic_DNA"/>
</dbReference>
<dbReference type="EMBL" id="EF125223">
    <property type="protein sequence ID" value="ABN58602.1"/>
    <property type="molecule type" value="Genomic_DNA"/>
</dbReference>
<dbReference type="EMBL" id="EF125224">
    <property type="protein sequence ID" value="ABN58611.1"/>
    <property type="molecule type" value="Genomic_DNA"/>
</dbReference>
<dbReference type="EMBL" id="EF125225">
    <property type="protein sequence ID" value="ABN58620.1"/>
    <property type="molecule type" value="Genomic_DNA"/>
</dbReference>
<dbReference type="EMBL" id="EF125226">
    <property type="protein sequence ID" value="ABN58629.1"/>
    <property type="molecule type" value="Genomic_DNA"/>
</dbReference>
<dbReference type="EMBL" id="EF125228">
    <property type="protein sequence ID" value="ABN58647.1"/>
    <property type="molecule type" value="Genomic_DNA"/>
</dbReference>
<dbReference type="EMBL" id="Z69382">
    <property type="protein sequence ID" value="CAA93389.1"/>
    <property type="molecule type" value="Genomic_DNA"/>
</dbReference>
<dbReference type="EMBL" id="Z71394">
    <property type="protein sequence ID" value="CAA95998.1"/>
    <property type="molecule type" value="Genomic_DNA"/>
</dbReference>
<dbReference type="EMBL" id="BK006947">
    <property type="protein sequence ID" value="DAA10430.1"/>
    <property type="molecule type" value="Genomic_DNA"/>
</dbReference>
<dbReference type="PIR" id="S63059">
    <property type="entry name" value="S63059"/>
</dbReference>
<dbReference type="RefSeq" id="NP_014281.1">
    <property type="nucleotide sequence ID" value="NM_001182956.1"/>
</dbReference>
<dbReference type="PDB" id="2JVB">
    <property type="method" value="NMR"/>
    <property type="chains" value="A=100-245"/>
</dbReference>
<dbReference type="PDB" id="4K6E">
    <property type="method" value="X-ray"/>
    <property type="resolution" value="2.10 A"/>
    <property type="chains" value="A=102-245"/>
</dbReference>
<dbReference type="PDB" id="4KG3">
    <property type="method" value="X-ray"/>
    <property type="resolution" value="1.70 A"/>
    <property type="chains" value="A/B/C=100-245"/>
</dbReference>
<dbReference type="PDB" id="4KG4">
    <property type="method" value="X-ray"/>
    <property type="resolution" value="1.80 A"/>
    <property type="chains" value="A/B=100-245"/>
</dbReference>
<dbReference type="PDB" id="5LM5">
    <property type="method" value="X-ray"/>
    <property type="resolution" value="2.60 A"/>
    <property type="chains" value="C/D=437-450"/>
</dbReference>
<dbReference type="PDB" id="5LMF">
    <property type="method" value="X-ray"/>
    <property type="resolution" value="2.15 A"/>
    <property type="chains" value="C/D=484-500"/>
</dbReference>
<dbReference type="PDB" id="5LMG">
    <property type="method" value="X-ray"/>
    <property type="resolution" value="1.89 A"/>
    <property type="chains" value="C/D=957-970"/>
</dbReference>
<dbReference type="PDB" id="6Y3Z">
    <property type="method" value="X-ray"/>
    <property type="resolution" value="3.49 A"/>
    <property type="chains" value="A=1-271"/>
</dbReference>
<dbReference type="PDBsum" id="2JVB"/>
<dbReference type="PDBsum" id="4K6E"/>
<dbReference type="PDBsum" id="4KG3"/>
<dbReference type="PDBsum" id="4KG4"/>
<dbReference type="PDBsum" id="5LM5"/>
<dbReference type="PDBsum" id="5LMF"/>
<dbReference type="PDBsum" id="5LMG"/>
<dbReference type="PDBsum" id="6Y3Z"/>
<dbReference type="BMRB" id="P53550"/>
<dbReference type="SMR" id="P53550"/>
<dbReference type="BioGRID" id="35708">
    <property type="interactions" value="672"/>
</dbReference>
<dbReference type="ComplexPortal" id="CPX-1628">
    <property type="entry name" value="RNA decapping complex, DCP1-DCP2"/>
</dbReference>
<dbReference type="DIP" id="DIP-969N"/>
<dbReference type="FunCoup" id="P53550">
    <property type="interactions" value="402"/>
</dbReference>
<dbReference type="IntAct" id="P53550">
    <property type="interactions" value="47"/>
</dbReference>
<dbReference type="MINT" id="P53550"/>
<dbReference type="STRING" id="4932.YNL118C"/>
<dbReference type="GlyGen" id="P53550">
    <property type="glycosylation" value="1 site"/>
</dbReference>
<dbReference type="iPTMnet" id="P53550"/>
<dbReference type="PaxDb" id="4932-YNL118C"/>
<dbReference type="PeptideAtlas" id="P53550"/>
<dbReference type="EnsemblFungi" id="YNL118C_mRNA">
    <property type="protein sequence ID" value="YNL118C"/>
    <property type="gene ID" value="YNL118C"/>
</dbReference>
<dbReference type="GeneID" id="855605"/>
<dbReference type="KEGG" id="sce:YNL118C"/>
<dbReference type="AGR" id="SGD:S000005062"/>
<dbReference type="SGD" id="S000005062">
    <property type="gene designation" value="DCP2"/>
</dbReference>
<dbReference type="VEuPathDB" id="FungiDB:YNL118C"/>
<dbReference type="eggNOG" id="KOG2937">
    <property type="taxonomic scope" value="Eukaryota"/>
</dbReference>
<dbReference type="GeneTree" id="ENSGT00390000018878"/>
<dbReference type="HOGENOM" id="CLU_009571_0_0_1"/>
<dbReference type="InParanoid" id="P53550"/>
<dbReference type="OMA" id="DETAHSN"/>
<dbReference type="OrthoDB" id="18996at2759"/>
<dbReference type="BioCyc" id="YEAST:G3O-33140-MONOMER"/>
<dbReference type="BRENDA" id="3.6.1.62">
    <property type="organism ID" value="984"/>
</dbReference>
<dbReference type="Reactome" id="R-SCE-430039">
    <property type="pathway name" value="mRNA decay by 5' to 3' exoribonuclease"/>
</dbReference>
<dbReference type="Reactome" id="R-SCE-450385">
    <property type="pathway name" value="Butyrate Response Factor 1 (BRF1) binds and destabilizes mRNA"/>
</dbReference>
<dbReference type="Reactome" id="R-SCE-450513">
    <property type="pathway name" value="Tristetraprolin (TTP, ZFP36) binds and destabilizes mRNA"/>
</dbReference>
<dbReference type="BioGRID-ORCS" id="855605">
    <property type="hits" value="0 hits in 10 CRISPR screens"/>
</dbReference>
<dbReference type="CD-CODE" id="A777E0F8">
    <property type="entry name" value="P-body"/>
</dbReference>
<dbReference type="CD-CODE" id="E03F929F">
    <property type="entry name" value="Stress granule"/>
</dbReference>
<dbReference type="CD-CODE" id="E7338DBF">
    <property type="entry name" value="Synthetic Condensate 000343"/>
</dbReference>
<dbReference type="ChiTaRS" id="DCP2">
    <property type="organism name" value="yeast"/>
</dbReference>
<dbReference type="EvolutionaryTrace" id="P53550"/>
<dbReference type="PRO" id="PR:P53550"/>
<dbReference type="Proteomes" id="UP000002311">
    <property type="component" value="Chromosome XIV"/>
</dbReference>
<dbReference type="RNAct" id="P53550">
    <property type="molecule type" value="protein"/>
</dbReference>
<dbReference type="GO" id="GO:0005737">
    <property type="term" value="C:cytoplasm"/>
    <property type="evidence" value="ECO:0000314"/>
    <property type="project" value="SGD"/>
</dbReference>
<dbReference type="GO" id="GO:0098562">
    <property type="term" value="C:cytoplasmic side of membrane"/>
    <property type="evidence" value="ECO:0000314"/>
    <property type="project" value="SGD"/>
</dbReference>
<dbReference type="GO" id="GO:0005634">
    <property type="term" value="C:nucleus"/>
    <property type="evidence" value="ECO:0000314"/>
    <property type="project" value="SGD"/>
</dbReference>
<dbReference type="GO" id="GO:0000932">
    <property type="term" value="C:P-body"/>
    <property type="evidence" value="ECO:0000314"/>
    <property type="project" value="SGD"/>
</dbReference>
<dbReference type="GO" id="GO:0098745">
    <property type="term" value="C:RNA decapping complex"/>
    <property type="evidence" value="ECO:0000314"/>
    <property type="project" value="SGD"/>
</dbReference>
<dbReference type="GO" id="GO:0140933">
    <property type="term" value="F:5'-(N(7)-methylguanosine 5'-triphospho)-[mRNA] hydrolase activity"/>
    <property type="evidence" value="ECO:0007669"/>
    <property type="project" value="UniProtKB-EC"/>
</dbReference>
<dbReference type="GO" id="GO:0003682">
    <property type="term" value="F:chromatin binding"/>
    <property type="evidence" value="ECO:0000314"/>
    <property type="project" value="SGD"/>
</dbReference>
<dbReference type="GO" id="GO:0016787">
    <property type="term" value="F:hydrolase activity"/>
    <property type="evidence" value="ECO:0000314"/>
    <property type="project" value="SGD"/>
</dbReference>
<dbReference type="GO" id="GO:0030145">
    <property type="term" value="F:manganese ion binding"/>
    <property type="evidence" value="ECO:0007669"/>
    <property type="project" value="InterPro"/>
</dbReference>
<dbReference type="GO" id="GO:0003729">
    <property type="term" value="F:mRNA binding"/>
    <property type="evidence" value="ECO:0000314"/>
    <property type="project" value="SGD"/>
</dbReference>
<dbReference type="GO" id="GO:0000290">
    <property type="term" value="P:deadenylation-dependent decapping of nuclear-transcribed mRNA"/>
    <property type="evidence" value="ECO:0000314"/>
    <property type="project" value="SGD"/>
</dbReference>
<dbReference type="GO" id="GO:0031087">
    <property type="term" value="P:deadenylation-independent decapping of nuclear-transcribed mRNA"/>
    <property type="evidence" value="ECO:0000315"/>
    <property type="project" value="SGD"/>
</dbReference>
<dbReference type="GO" id="GO:0006397">
    <property type="term" value="P:mRNA processing"/>
    <property type="evidence" value="ECO:0007669"/>
    <property type="project" value="UniProtKB-KW"/>
</dbReference>
<dbReference type="GO" id="GO:0000184">
    <property type="term" value="P:nuclear-transcribed mRNA catabolic process, nonsense-mediated decay"/>
    <property type="evidence" value="ECO:0000303"/>
    <property type="project" value="ComplexPortal"/>
</dbReference>
<dbReference type="GO" id="GO:0060261">
    <property type="term" value="P:positive regulation of transcription initiation by RNA polymerase II"/>
    <property type="evidence" value="ECO:0000315"/>
    <property type="project" value="SGD"/>
</dbReference>
<dbReference type="GO" id="GO:0034063">
    <property type="term" value="P:stress granule assembly"/>
    <property type="evidence" value="ECO:0000315"/>
    <property type="project" value="SGD"/>
</dbReference>
<dbReference type="CDD" id="cd03672">
    <property type="entry name" value="NUDIX_Dcp2p_Nudt20"/>
    <property type="match status" value="1"/>
</dbReference>
<dbReference type="FunFam" id="3.90.79.10:FF:000045">
    <property type="entry name" value="mRNA-decapping enzyme 2"/>
    <property type="match status" value="1"/>
</dbReference>
<dbReference type="Gene3D" id="1.10.10.1050">
    <property type="entry name" value="Dcp2, box A domain"/>
    <property type="match status" value="1"/>
</dbReference>
<dbReference type="Gene3D" id="3.90.79.10">
    <property type="entry name" value="Nucleoside Triphosphate Pyrophosphohydrolase"/>
    <property type="match status" value="1"/>
</dbReference>
<dbReference type="InterPro" id="IPR007722">
    <property type="entry name" value="DCP2_BoxA"/>
</dbReference>
<dbReference type="InterPro" id="IPR036189">
    <property type="entry name" value="DCP2_BoxA_sf"/>
</dbReference>
<dbReference type="InterPro" id="IPR044099">
    <property type="entry name" value="Dcp2_NUDIX"/>
</dbReference>
<dbReference type="InterPro" id="IPR015797">
    <property type="entry name" value="NUDIX_hydrolase-like_dom_sf"/>
</dbReference>
<dbReference type="InterPro" id="IPR020084">
    <property type="entry name" value="NUDIX_hydrolase_CS"/>
</dbReference>
<dbReference type="InterPro" id="IPR000086">
    <property type="entry name" value="NUDIX_hydrolase_dom"/>
</dbReference>
<dbReference type="PANTHER" id="PTHR23114">
    <property type="entry name" value="M7GPPPN-MRNA HYDROLASE"/>
    <property type="match status" value="1"/>
</dbReference>
<dbReference type="PANTHER" id="PTHR23114:SF17">
    <property type="entry name" value="M7GPPPN-MRNA HYDROLASE"/>
    <property type="match status" value="1"/>
</dbReference>
<dbReference type="Pfam" id="PF05026">
    <property type="entry name" value="DCP2"/>
    <property type="match status" value="1"/>
</dbReference>
<dbReference type="Pfam" id="PF00293">
    <property type="entry name" value="NUDIX"/>
    <property type="match status" value="1"/>
</dbReference>
<dbReference type="SMART" id="SM01125">
    <property type="entry name" value="DCP2"/>
    <property type="match status" value="1"/>
</dbReference>
<dbReference type="SUPFAM" id="SSF140586">
    <property type="entry name" value="Dcp2 domain-like"/>
    <property type="match status" value="1"/>
</dbReference>
<dbReference type="SUPFAM" id="SSF55811">
    <property type="entry name" value="Nudix"/>
    <property type="match status" value="1"/>
</dbReference>
<dbReference type="PROSITE" id="PS51462">
    <property type="entry name" value="NUDIX"/>
    <property type="match status" value="1"/>
</dbReference>
<dbReference type="PROSITE" id="PS00893">
    <property type="entry name" value="NUDIX_BOX"/>
    <property type="match status" value="1"/>
</dbReference>
<protein>
    <recommendedName>
        <fullName evidence="15">m7GpppN-mRNA hydrolase</fullName>
        <ecNumber evidence="8">3.6.1.62</ecNumber>
    </recommendedName>
    <alternativeName>
        <fullName>Protein PSU1</fullName>
    </alternativeName>
    <alternativeName>
        <fullName evidence="14">mRNA-decapping enzyme subunit 2</fullName>
    </alternativeName>
</protein>
<name>DCP2_YEAST</name>
<proteinExistence type="evidence at protein level"/>
<sequence length="970" mass="108667">MSLPLRHALENVTSVDRILEDLLVRFIINCPNEDLSSVERELFHFEEASWFYTDFIKLMNPTLPSLKIKSFAQLIIKLCPLVWKWDIRVDEALQQFSKYKKSIPVRGAAIFNENLSKILLVQGTESDSWSFPRGKISKDENDIDCCIREVKEEIGFDLTDYIDDNQFIERNIQGKNYKIFLISGVSEVFNFKPQVRNEIDKIEWFDFKKISKTMYKSNIKYYLINSMMRPLSMWLRHQRQIKNEDQLKSYAEEQLKLLLGITKEEQIDPGRELLNMLHTAVQANSNNNAVSNGQVPSSQELQHLKEQSGEHNQQKDQQSSFSSQQQPSIFPSLSEPFANNKNVIPPTMPMANVFMSNPQLFATMNGQPFAPFPFMLPLTNNSNSANPIPTPVPPNFNAPPNPMAFGVPNMHNLSGPAVSQPFSLPPAPLPRDSGYSSSSPGQLLDILNSKKPDSNVQSSKKPKLKILQRGTDLNSIKQNNNDETAHSNSQALLDLLKKPTSSQKIHASKPDTSFLPNDSVSGIQDAEYEDFESSSDEEVETARDERNSLNVDIGVNVMPSEKDSRRSQKEKPRNDASKTNLNASAESNSVEWGPGKSSPSTQSKQNSSVGMQNKYRQEIHIGDSDAYEVFESSSDEEDGKKLEELEQTQDNSKLISQDILKENNFQDGEVPHRDMPTESNKSINETVGLSSTTNTVKKVPKVKILKRGETFASLANDKKAFDSSSNVSSSKDLLQMLRNPISSTVSSNQQSPKSQHLSGDEEIMMMLKRNSVSKPQNSEENASTSSINDANASELLGMLKQKEKDITAPKQPYNVDSYSQKNSAKGLLNILKKNDSTGYPRTEGGPSSEMSTSMKRNDATNNQELDKNSTELLNYLKPKPLNDGYENISNKDSSHELLNILHGNKNSSAFNNNVYATDGYSLASDNNENSSNKLLNMLQNRSSAINEPNFDVRSNGTSGSNELLSILHRK</sequence>
<gene>
    <name evidence="14" type="primary">DCP2</name>
    <name type="synonym">PSU1</name>
    <name evidence="16" type="ordered locus">YNL118C</name>
    <name type="ORF">N1917</name>
</gene>